<protein>
    <recommendedName>
        <fullName evidence="1">Anhydro-N-acetylmuramic acid kinase</fullName>
        <ecNumber evidence="1">2.7.1.170</ecNumber>
    </recommendedName>
    <alternativeName>
        <fullName evidence="1">AnhMurNAc kinase</fullName>
    </alternativeName>
</protein>
<evidence type="ECO:0000255" key="1">
    <source>
        <dbReference type="HAMAP-Rule" id="MF_01270"/>
    </source>
</evidence>
<sequence>MKSGRFIGVMSGTSLDGVDVVLATIDEHRVAQLASLSWPIPVSLKQAVLDICQGQQLTLSQFGQLDTQLGRLFADAVNALLKEQNLQARDIVAIGCHGQTVWHEPTGVAPHTLQIGDNNQIAARTGITVVGDFRRRDIALGGQGAPLVPAFHHALLAHPTERRMVLNIGGIANLSLLIPGQPVGGYDTGPGNMLMDAWIWRQAGKPYDKDAEWARAGKVILPLLQNMLSDPYFSQPAPKSTGREYFNYGWLERHLRHFPGVDPRDVQATLAELTAVTISEQVLLSGGCERLMVCGGGSRNPLLMARLAALLPGTEVTTTDAVGISGDDMEALAFAWLAWRTLAGLPGNLPSVTGASQETVLGAIFPANP</sequence>
<comment type="function">
    <text evidence="1">Catalyzes the specific phosphorylation of 1,6-anhydro-N-acetylmuramic acid (anhMurNAc) with the simultaneous cleavage of the 1,6-anhydro ring, generating MurNAc-6-P. Is required for the utilization of anhMurNAc either imported from the medium or derived from its own cell wall murein, and thus plays a role in cell wall recycling.</text>
</comment>
<comment type="catalytic activity">
    <reaction evidence="1">
        <text>1,6-anhydro-N-acetyl-beta-muramate + ATP + H2O = N-acetyl-D-muramate 6-phosphate + ADP + H(+)</text>
        <dbReference type="Rhea" id="RHEA:24952"/>
        <dbReference type="ChEBI" id="CHEBI:15377"/>
        <dbReference type="ChEBI" id="CHEBI:15378"/>
        <dbReference type="ChEBI" id="CHEBI:30616"/>
        <dbReference type="ChEBI" id="CHEBI:58690"/>
        <dbReference type="ChEBI" id="CHEBI:58722"/>
        <dbReference type="ChEBI" id="CHEBI:456216"/>
        <dbReference type="EC" id="2.7.1.170"/>
    </reaction>
</comment>
<comment type="pathway">
    <text evidence="1">Amino-sugar metabolism; 1,6-anhydro-N-acetylmuramate degradation.</text>
</comment>
<comment type="pathway">
    <text evidence="1">Cell wall biogenesis; peptidoglycan recycling.</text>
</comment>
<comment type="similarity">
    <text evidence="1">Belongs to the anhydro-N-acetylmuramic acid kinase family.</text>
</comment>
<organism>
    <name type="scientific">Escherichia coli O7:K1 (strain IAI39 / ExPEC)</name>
    <dbReference type="NCBI Taxonomy" id="585057"/>
    <lineage>
        <taxon>Bacteria</taxon>
        <taxon>Pseudomonadati</taxon>
        <taxon>Pseudomonadota</taxon>
        <taxon>Gammaproteobacteria</taxon>
        <taxon>Enterobacterales</taxon>
        <taxon>Enterobacteriaceae</taxon>
        <taxon>Escherichia</taxon>
    </lineage>
</organism>
<keyword id="KW-0067">ATP-binding</keyword>
<keyword id="KW-0119">Carbohydrate metabolism</keyword>
<keyword id="KW-0418">Kinase</keyword>
<keyword id="KW-0547">Nucleotide-binding</keyword>
<keyword id="KW-0808">Transferase</keyword>
<reference key="1">
    <citation type="journal article" date="2009" name="PLoS Genet.">
        <title>Organised genome dynamics in the Escherichia coli species results in highly diverse adaptive paths.</title>
        <authorList>
            <person name="Touchon M."/>
            <person name="Hoede C."/>
            <person name="Tenaillon O."/>
            <person name="Barbe V."/>
            <person name="Baeriswyl S."/>
            <person name="Bidet P."/>
            <person name="Bingen E."/>
            <person name="Bonacorsi S."/>
            <person name="Bouchier C."/>
            <person name="Bouvet O."/>
            <person name="Calteau A."/>
            <person name="Chiapello H."/>
            <person name="Clermont O."/>
            <person name="Cruveiller S."/>
            <person name="Danchin A."/>
            <person name="Diard M."/>
            <person name="Dossat C."/>
            <person name="Karoui M.E."/>
            <person name="Frapy E."/>
            <person name="Garry L."/>
            <person name="Ghigo J.M."/>
            <person name="Gilles A.M."/>
            <person name="Johnson J."/>
            <person name="Le Bouguenec C."/>
            <person name="Lescat M."/>
            <person name="Mangenot S."/>
            <person name="Martinez-Jehanne V."/>
            <person name="Matic I."/>
            <person name="Nassif X."/>
            <person name="Oztas S."/>
            <person name="Petit M.A."/>
            <person name="Pichon C."/>
            <person name="Rouy Z."/>
            <person name="Ruf C.S."/>
            <person name="Schneider D."/>
            <person name="Tourret J."/>
            <person name="Vacherie B."/>
            <person name="Vallenet D."/>
            <person name="Medigue C."/>
            <person name="Rocha E.P.C."/>
            <person name="Denamur E."/>
        </authorList>
    </citation>
    <scope>NUCLEOTIDE SEQUENCE [LARGE SCALE GENOMIC DNA]</scope>
    <source>
        <strain>IAI39 / ExPEC</strain>
    </source>
</reference>
<name>ANMK_ECO7I</name>
<proteinExistence type="inferred from homology"/>
<feature type="chain" id="PRO_1000140155" description="Anhydro-N-acetylmuramic acid kinase">
    <location>
        <begin position="1"/>
        <end position="369"/>
    </location>
</feature>
<feature type="binding site" evidence="1">
    <location>
        <begin position="12"/>
        <end position="19"/>
    </location>
    <ligand>
        <name>ATP</name>
        <dbReference type="ChEBI" id="CHEBI:30616"/>
    </ligand>
</feature>
<gene>
    <name evidence="1" type="primary">anmK</name>
    <name type="ordered locus">ECIAI39_1415</name>
</gene>
<accession>B7NTZ2</accession>
<dbReference type="EC" id="2.7.1.170" evidence="1"/>
<dbReference type="EMBL" id="CU928164">
    <property type="protein sequence ID" value="CAR17548.1"/>
    <property type="molecule type" value="Genomic_DNA"/>
</dbReference>
<dbReference type="RefSeq" id="WP_000835049.1">
    <property type="nucleotide sequence ID" value="NC_011750.1"/>
</dbReference>
<dbReference type="RefSeq" id="YP_002407420.1">
    <property type="nucleotide sequence ID" value="NC_011750.1"/>
</dbReference>
<dbReference type="SMR" id="B7NTZ2"/>
<dbReference type="STRING" id="585057.ECIAI39_1415"/>
<dbReference type="KEGG" id="ect:ECIAI39_1415"/>
<dbReference type="PATRIC" id="fig|585057.6.peg.1482"/>
<dbReference type="HOGENOM" id="CLU_038782_0_0_6"/>
<dbReference type="UniPathway" id="UPA00343"/>
<dbReference type="UniPathway" id="UPA00544"/>
<dbReference type="Proteomes" id="UP000000749">
    <property type="component" value="Chromosome"/>
</dbReference>
<dbReference type="GO" id="GO:0005524">
    <property type="term" value="F:ATP binding"/>
    <property type="evidence" value="ECO:0007669"/>
    <property type="project" value="UniProtKB-UniRule"/>
</dbReference>
<dbReference type="GO" id="GO:0016301">
    <property type="term" value="F:kinase activity"/>
    <property type="evidence" value="ECO:0007669"/>
    <property type="project" value="UniProtKB-KW"/>
</dbReference>
<dbReference type="GO" id="GO:0016773">
    <property type="term" value="F:phosphotransferase activity, alcohol group as acceptor"/>
    <property type="evidence" value="ECO:0007669"/>
    <property type="project" value="UniProtKB-UniRule"/>
</dbReference>
<dbReference type="GO" id="GO:0097175">
    <property type="term" value="P:1,6-anhydro-N-acetyl-beta-muramic acid catabolic process"/>
    <property type="evidence" value="ECO:0007669"/>
    <property type="project" value="UniProtKB-UniRule"/>
</dbReference>
<dbReference type="GO" id="GO:0006040">
    <property type="term" value="P:amino sugar metabolic process"/>
    <property type="evidence" value="ECO:0007669"/>
    <property type="project" value="InterPro"/>
</dbReference>
<dbReference type="GO" id="GO:0009254">
    <property type="term" value="P:peptidoglycan turnover"/>
    <property type="evidence" value="ECO:0007669"/>
    <property type="project" value="UniProtKB-UniRule"/>
</dbReference>
<dbReference type="CDD" id="cd24050">
    <property type="entry name" value="ASKHA_NBD_ANMK"/>
    <property type="match status" value="1"/>
</dbReference>
<dbReference type="FunFam" id="3.30.420.40:FF:000090">
    <property type="entry name" value="Anhydro-N-acetylmuramic acid kinase"/>
    <property type="match status" value="1"/>
</dbReference>
<dbReference type="Gene3D" id="3.30.420.40">
    <property type="match status" value="2"/>
</dbReference>
<dbReference type="HAMAP" id="MF_01270">
    <property type="entry name" value="AnhMurNAc_kinase"/>
    <property type="match status" value="1"/>
</dbReference>
<dbReference type="InterPro" id="IPR005338">
    <property type="entry name" value="Anhydro_N_Ac-Mur_kinase"/>
</dbReference>
<dbReference type="InterPro" id="IPR043129">
    <property type="entry name" value="ATPase_NBD"/>
</dbReference>
<dbReference type="NCBIfam" id="NF007138">
    <property type="entry name" value="PRK09585.1-1"/>
    <property type="match status" value="1"/>
</dbReference>
<dbReference type="NCBIfam" id="NF007139">
    <property type="entry name" value="PRK09585.1-3"/>
    <property type="match status" value="1"/>
</dbReference>
<dbReference type="NCBIfam" id="NF007148">
    <property type="entry name" value="PRK09585.3-2"/>
    <property type="match status" value="1"/>
</dbReference>
<dbReference type="PANTHER" id="PTHR30605">
    <property type="entry name" value="ANHYDRO-N-ACETYLMURAMIC ACID KINASE"/>
    <property type="match status" value="1"/>
</dbReference>
<dbReference type="PANTHER" id="PTHR30605:SF0">
    <property type="entry name" value="ANHYDRO-N-ACETYLMURAMIC ACID KINASE"/>
    <property type="match status" value="1"/>
</dbReference>
<dbReference type="Pfam" id="PF03702">
    <property type="entry name" value="AnmK"/>
    <property type="match status" value="1"/>
</dbReference>
<dbReference type="SUPFAM" id="SSF53067">
    <property type="entry name" value="Actin-like ATPase domain"/>
    <property type="match status" value="1"/>
</dbReference>